<geneLocation type="mitochondrion"/>
<keyword id="KW-0249">Electron transport</keyword>
<keyword id="KW-0349">Heme</keyword>
<keyword id="KW-0408">Iron</keyword>
<keyword id="KW-0472">Membrane</keyword>
<keyword id="KW-0479">Metal-binding</keyword>
<keyword id="KW-0496">Mitochondrion</keyword>
<keyword id="KW-0999">Mitochondrion inner membrane</keyword>
<keyword id="KW-0679">Respiratory chain</keyword>
<keyword id="KW-0812">Transmembrane</keyword>
<keyword id="KW-1133">Transmembrane helix</keyword>
<keyword id="KW-0813">Transport</keyword>
<keyword id="KW-0830">Ubiquinone</keyword>
<gene>
    <name type="primary">MT-CYB</name>
    <name type="synonym">COB</name>
    <name type="synonym">CYTB</name>
    <name type="synonym">MTCYB</name>
</gene>
<comment type="function">
    <text evidence="2">Component of the ubiquinol-cytochrome c reductase complex (complex III or cytochrome b-c1 complex) that is part of the mitochondrial respiratory chain. The b-c1 complex mediates electron transfer from ubiquinol to cytochrome c. Contributes to the generation of a proton gradient across the mitochondrial membrane that is then used for ATP synthesis.</text>
</comment>
<comment type="cofactor">
    <cofactor evidence="2">
        <name>heme b</name>
        <dbReference type="ChEBI" id="CHEBI:60344"/>
    </cofactor>
    <text evidence="2">Binds 2 heme b groups non-covalently.</text>
</comment>
<comment type="subunit">
    <text evidence="2">The cytochrome bc1 complex contains 11 subunits: 3 respiratory subunits (MT-CYB, CYC1 and UQCRFS1), 2 core proteins (UQCRC1 and UQCRC2) and 6 low-molecular weight proteins (UQCRH/QCR6, UQCRB/QCR7, UQCRQ/QCR8, UQCR10/QCR9, UQCR11/QCR10 and a cleavage product of UQCRFS1). This cytochrome bc1 complex then forms a dimer.</text>
</comment>
<comment type="subcellular location">
    <subcellularLocation>
        <location evidence="2">Mitochondrion inner membrane</location>
        <topology evidence="2">Multi-pass membrane protein</topology>
    </subcellularLocation>
</comment>
<comment type="miscellaneous">
    <text evidence="1">Heme 1 (or BL or b562) is low-potential and absorbs at about 562 nm, and heme 2 (or BH or b566) is high-potential and absorbs at about 566 nm.</text>
</comment>
<comment type="similarity">
    <text evidence="3 4">Belongs to the cytochrome b family.</text>
</comment>
<comment type="caution">
    <text evidence="2">The full-length protein contains only eight transmembrane helices, not nine as predicted by bioinformatics tools.</text>
</comment>
<name>CYB_ANTAM</name>
<protein>
    <recommendedName>
        <fullName>Cytochrome b</fullName>
    </recommendedName>
    <alternativeName>
        <fullName>Complex III subunit 3</fullName>
    </alternativeName>
    <alternativeName>
        <fullName>Complex III subunit III</fullName>
    </alternativeName>
    <alternativeName>
        <fullName>Cytochrome b-c1 complex subunit 3</fullName>
    </alternativeName>
    <alternativeName>
        <fullName>Ubiquinol-cytochrome-c reductase complex cytochrome b subunit</fullName>
    </alternativeName>
</protein>
<reference key="1">
    <citation type="journal article" date="1991" name="J. Mol. Evol.">
        <title>Evolution of the cytochrome b gene of mammals.</title>
        <authorList>
            <person name="Irwin D.M."/>
            <person name="Kocher T.D."/>
            <person name="Wilson A.C."/>
        </authorList>
    </citation>
    <scope>NUCLEOTIDE SEQUENCE [GENOMIC DNA]</scope>
</reference>
<reference key="2">
    <citation type="journal article" date="1999" name="Proc. R. Soc. B">
        <title>Evolutionary affinities of the enigmatic saola (Pseudoryx nghetinhensis) in the context of the molecular phylogeny of Bovidae.</title>
        <authorList>
            <person name="Hassanin A."/>
            <person name="Douzery E.J.P."/>
        </authorList>
    </citation>
    <scope>NUCLEOTIDE SEQUENCE [GENOMIC DNA]</scope>
</reference>
<sequence>MINIRKSHPLMKIVNNAFIDLPAPSNISSWWNFGSLLGICLILQILTGLFLAMHYTADTTTAFSSVTHICRDVNYGWIIRYMHANGASMFFICLFMHVGRGLYYGSYMFLETWNIGVILLFTVMATAFMGYVLPWGQMSFWGATVITNLLSAIPYIGTNLVEWIWGGFSVDKATLTRFFAFHFILPFIIAALAMVHLLFLHETGSNNPTGIPSDADKIPFHPYYTIKDILGALLMILALMMLVLFSPDLLGDPDNYTPANPLNTPPHIKPEWYFLFAYAILRSIPNKLGGVLALVLSILILIFMPLLHTSKQRSMMFRPFSQCLFWILVADLLTLTWIGGQPVEHPFIIIGQLASIMYFLIILVLMPVTSTIENNLLKW</sequence>
<accession>P24992</accession>
<feature type="chain" id="PRO_0000060590" description="Cytochrome b">
    <location>
        <begin position="1"/>
        <end position="379"/>
    </location>
</feature>
<feature type="transmembrane region" description="Helical" evidence="2">
    <location>
        <begin position="33"/>
        <end position="53"/>
    </location>
</feature>
<feature type="transmembrane region" description="Helical" evidence="2">
    <location>
        <begin position="77"/>
        <end position="98"/>
    </location>
</feature>
<feature type="transmembrane region" description="Helical" evidence="2">
    <location>
        <begin position="113"/>
        <end position="133"/>
    </location>
</feature>
<feature type="transmembrane region" description="Helical" evidence="2">
    <location>
        <begin position="178"/>
        <end position="198"/>
    </location>
</feature>
<feature type="transmembrane region" description="Helical" evidence="2">
    <location>
        <begin position="226"/>
        <end position="246"/>
    </location>
</feature>
<feature type="transmembrane region" description="Helical" evidence="2">
    <location>
        <begin position="288"/>
        <end position="308"/>
    </location>
</feature>
<feature type="transmembrane region" description="Helical" evidence="2">
    <location>
        <begin position="320"/>
        <end position="340"/>
    </location>
</feature>
<feature type="transmembrane region" description="Helical" evidence="2">
    <location>
        <begin position="347"/>
        <end position="367"/>
    </location>
</feature>
<feature type="binding site" description="axial binding residue" evidence="2">
    <location>
        <position position="83"/>
    </location>
    <ligand>
        <name>heme b</name>
        <dbReference type="ChEBI" id="CHEBI:60344"/>
        <label>b562</label>
    </ligand>
    <ligandPart>
        <name>Fe</name>
        <dbReference type="ChEBI" id="CHEBI:18248"/>
    </ligandPart>
</feature>
<feature type="binding site" description="axial binding residue" evidence="2">
    <location>
        <position position="97"/>
    </location>
    <ligand>
        <name>heme b</name>
        <dbReference type="ChEBI" id="CHEBI:60344"/>
        <label>b566</label>
    </ligand>
    <ligandPart>
        <name>Fe</name>
        <dbReference type="ChEBI" id="CHEBI:18248"/>
    </ligandPart>
</feature>
<feature type="binding site" description="axial binding residue" evidence="2">
    <location>
        <position position="182"/>
    </location>
    <ligand>
        <name>heme b</name>
        <dbReference type="ChEBI" id="CHEBI:60344"/>
        <label>b562</label>
    </ligand>
    <ligandPart>
        <name>Fe</name>
        <dbReference type="ChEBI" id="CHEBI:18248"/>
    </ligandPart>
</feature>
<feature type="binding site" description="axial binding residue" evidence="2">
    <location>
        <position position="196"/>
    </location>
    <ligand>
        <name>heme b</name>
        <dbReference type="ChEBI" id="CHEBI:60344"/>
        <label>b566</label>
    </ligand>
    <ligandPart>
        <name>Fe</name>
        <dbReference type="ChEBI" id="CHEBI:18248"/>
    </ligandPart>
</feature>
<feature type="binding site" evidence="2">
    <location>
        <position position="201"/>
    </location>
    <ligand>
        <name>a ubiquinone</name>
        <dbReference type="ChEBI" id="CHEBI:16389"/>
    </ligand>
</feature>
<dbReference type="EMBL" id="X56286">
    <property type="protein sequence ID" value="CAA39733.1"/>
    <property type="molecule type" value="Genomic_DNA"/>
</dbReference>
<dbReference type="EMBL" id="AF091629">
    <property type="protein sequence ID" value="AAD42702.1"/>
    <property type="molecule type" value="Genomic_DNA"/>
</dbReference>
<dbReference type="PIR" id="S17405">
    <property type="entry name" value="S17405"/>
</dbReference>
<dbReference type="SMR" id="P24992"/>
<dbReference type="GO" id="GO:0005743">
    <property type="term" value="C:mitochondrial inner membrane"/>
    <property type="evidence" value="ECO:0007669"/>
    <property type="project" value="UniProtKB-SubCell"/>
</dbReference>
<dbReference type="GO" id="GO:0045275">
    <property type="term" value="C:respiratory chain complex III"/>
    <property type="evidence" value="ECO:0007669"/>
    <property type="project" value="InterPro"/>
</dbReference>
<dbReference type="GO" id="GO:0046872">
    <property type="term" value="F:metal ion binding"/>
    <property type="evidence" value="ECO:0007669"/>
    <property type="project" value="UniProtKB-KW"/>
</dbReference>
<dbReference type="GO" id="GO:0008121">
    <property type="term" value="F:ubiquinol-cytochrome-c reductase activity"/>
    <property type="evidence" value="ECO:0007669"/>
    <property type="project" value="InterPro"/>
</dbReference>
<dbReference type="GO" id="GO:0006122">
    <property type="term" value="P:mitochondrial electron transport, ubiquinol to cytochrome c"/>
    <property type="evidence" value="ECO:0007669"/>
    <property type="project" value="TreeGrafter"/>
</dbReference>
<dbReference type="CDD" id="cd00290">
    <property type="entry name" value="cytochrome_b_C"/>
    <property type="match status" value="1"/>
</dbReference>
<dbReference type="CDD" id="cd00284">
    <property type="entry name" value="Cytochrome_b_N"/>
    <property type="match status" value="1"/>
</dbReference>
<dbReference type="FunFam" id="1.20.810.10:FF:000002">
    <property type="entry name" value="Cytochrome b"/>
    <property type="match status" value="1"/>
</dbReference>
<dbReference type="Gene3D" id="1.20.810.10">
    <property type="entry name" value="Cytochrome Bc1 Complex, Chain C"/>
    <property type="match status" value="1"/>
</dbReference>
<dbReference type="InterPro" id="IPR005798">
    <property type="entry name" value="Cyt_b/b6_C"/>
</dbReference>
<dbReference type="InterPro" id="IPR036150">
    <property type="entry name" value="Cyt_b/b6_C_sf"/>
</dbReference>
<dbReference type="InterPro" id="IPR005797">
    <property type="entry name" value="Cyt_b/b6_N"/>
</dbReference>
<dbReference type="InterPro" id="IPR027387">
    <property type="entry name" value="Cytb/b6-like_sf"/>
</dbReference>
<dbReference type="InterPro" id="IPR030689">
    <property type="entry name" value="Cytochrome_b"/>
</dbReference>
<dbReference type="InterPro" id="IPR048260">
    <property type="entry name" value="Cytochrome_b_C_euk/bac"/>
</dbReference>
<dbReference type="InterPro" id="IPR048259">
    <property type="entry name" value="Cytochrome_b_N_euk/bac"/>
</dbReference>
<dbReference type="InterPro" id="IPR016174">
    <property type="entry name" value="Di-haem_cyt_TM"/>
</dbReference>
<dbReference type="PANTHER" id="PTHR19271">
    <property type="entry name" value="CYTOCHROME B"/>
    <property type="match status" value="1"/>
</dbReference>
<dbReference type="PANTHER" id="PTHR19271:SF16">
    <property type="entry name" value="CYTOCHROME B"/>
    <property type="match status" value="1"/>
</dbReference>
<dbReference type="Pfam" id="PF00032">
    <property type="entry name" value="Cytochrom_B_C"/>
    <property type="match status" value="1"/>
</dbReference>
<dbReference type="Pfam" id="PF00033">
    <property type="entry name" value="Cytochrome_B"/>
    <property type="match status" value="1"/>
</dbReference>
<dbReference type="PIRSF" id="PIRSF038885">
    <property type="entry name" value="COB"/>
    <property type="match status" value="1"/>
</dbReference>
<dbReference type="SUPFAM" id="SSF81648">
    <property type="entry name" value="a domain/subunit of cytochrome bc1 complex (Ubiquinol-cytochrome c reductase)"/>
    <property type="match status" value="1"/>
</dbReference>
<dbReference type="SUPFAM" id="SSF81342">
    <property type="entry name" value="Transmembrane di-heme cytochromes"/>
    <property type="match status" value="1"/>
</dbReference>
<dbReference type="PROSITE" id="PS51003">
    <property type="entry name" value="CYTB_CTER"/>
    <property type="match status" value="1"/>
</dbReference>
<dbReference type="PROSITE" id="PS51002">
    <property type="entry name" value="CYTB_NTER"/>
    <property type="match status" value="1"/>
</dbReference>
<organism>
    <name type="scientific">Antilocapra americana</name>
    <name type="common">Pronghorn</name>
    <dbReference type="NCBI Taxonomy" id="9891"/>
    <lineage>
        <taxon>Eukaryota</taxon>
        <taxon>Metazoa</taxon>
        <taxon>Chordata</taxon>
        <taxon>Craniata</taxon>
        <taxon>Vertebrata</taxon>
        <taxon>Euteleostomi</taxon>
        <taxon>Mammalia</taxon>
        <taxon>Eutheria</taxon>
        <taxon>Laurasiatheria</taxon>
        <taxon>Artiodactyla</taxon>
        <taxon>Ruminantia</taxon>
        <taxon>Pecora</taxon>
        <taxon>Antilocapridae</taxon>
        <taxon>Antilocapra</taxon>
    </lineage>
</organism>
<proteinExistence type="inferred from homology"/>
<evidence type="ECO:0000250" key="1"/>
<evidence type="ECO:0000250" key="2">
    <source>
        <dbReference type="UniProtKB" id="P00157"/>
    </source>
</evidence>
<evidence type="ECO:0000255" key="3">
    <source>
        <dbReference type="PROSITE-ProRule" id="PRU00967"/>
    </source>
</evidence>
<evidence type="ECO:0000255" key="4">
    <source>
        <dbReference type="PROSITE-ProRule" id="PRU00968"/>
    </source>
</evidence>